<reference key="1">
    <citation type="submission" date="2007-07" db="EMBL/GenBank/DDBJ databases">
        <title>Complete sequence of chromosome of Shewanella baltica OS185.</title>
        <authorList>
            <consortium name="US DOE Joint Genome Institute"/>
            <person name="Copeland A."/>
            <person name="Lucas S."/>
            <person name="Lapidus A."/>
            <person name="Barry K."/>
            <person name="Glavina del Rio T."/>
            <person name="Dalin E."/>
            <person name="Tice H."/>
            <person name="Pitluck S."/>
            <person name="Sims D."/>
            <person name="Brettin T."/>
            <person name="Bruce D."/>
            <person name="Detter J.C."/>
            <person name="Han C."/>
            <person name="Schmutz J."/>
            <person name="Larimer F."/>
            <person name="Land M."/>
            <person name="Hauser L."/>
            <person name="Kyrpides N."/>
            <person name="Mikhailova N."/>
            <person name="Brettar I."/>
            <person name="Rodrigues J."/>
            <person name="Konstantinidis K."/>
            <person name="Tiedje J."/>
            <person name="Richardson P."/>
        </authorList>
    </citation>
    <scope>NUCLEOTIDE SEQUENCE [LARGE SCALE GENOMIC DNA]</scope>
    <source>
        <strain>OS185</strain>
    </source>
</reference>
<accession>A6WNQ3</accession>
<gene>
    <name evidence="1" type="primary">ruvA</name>
    <name type="ordered locus">Shew185_2304</name>
</gene>
<evidence type="ECO:0000255" key="1">
    <source>
        <dbReference type="HAMAP-Rule" id="MF_00031"/>
    </source>
</evidence>
<protein>
    <recommendedName>
        <fullName evidence="1">Holliday junction branch migration complex subunit RuvA</fullName>
    </recommendedName>
</protein>
<feature type="chain" id="PRO_1000002547" description="Holliday junction branch migration complex subunit RuvA">
    <location>
        <begin position="1"/>
        <end position="205"/>
    </location>
</feature>
<feature type="region of interest" description="Domain I" evidence="1">
    <location>
        <begin position="1"/>
        <end position="64"/>
    </location>
</feature>
<feature type="region of interest" description="Domain II" evidence="1">
    <location>
        <begin position="65"/>
        <end position="143"/>
    </location>
</feature>
<feature type="region of interest" description="Flexible linker" evidence="1">
    <location>
        <begin position="144"/>
        <end position="156"/>
    </location>
</feature>
<feature type="region of interest" description="Domain III" evidence="1">
    <location>
        <begin position="157"/>
        <end position="205"/>
    </location>
</feature>
<dbReference type="EMBL" id="CP000753">
    <property type="protein sequence ID" value="ABS08442.1"/>
    <property type="molecule type" value="Genomic_DNA"/>
</dbReference>
<dbReference type="RefSeq" id="WP_006081742.1">
    <property type="nucleotide sequence ID" value="NC_009665.1"/>
</dbReference>
<dbReference type="SMR" id="A6WNQ3"/>
<dbReference type="GeneID" id="11772537"/>
<dbReference type="KEGG" id="sbm:Shew185_2304"/>
<dbReference type="HOGENOM" id="CLU_087936_0_0_6"/>
<dbReference type="GO" id="GO:0005737">
    <property type="term" value="C:cytoplasm"/>
    <property type="evidence" value="ECO:0007669"/>
    <property type="project" value="UniProtKB-SubCell"/>
</dbReference>
<dbReference type="GO" id="GO:0009379">
    <property type="term" value="C:Holliday junction helicase complex"/>
    <property type="evidence" value="ECO:0007669"/>
    <property type="project" value="InterPro"/>
</dbReference>
<dbReference type="GO" id="GO:0048476">
    <property type="term" value="C:Holliday junction resolvase complex"/>
    <property type="evidence" value="ECO:0007669"/>
    <property type="project" value="UniProtKB-UniRule"/>
</dbReference>
<dbReference type="GO" id="GO:0005524">
    <property type="term" value="F:ATP binding"/>
    <property type="evidence" value="ECO:0007669"/>
    <property type="project" value="InterPro"/>
</dbReference>
<dbReference type="GO" id="GO:0000400">
    <property type="term" value="F:four-way junction DNA binding"/>
    <property type="evidence" value="ECO:0007669"/>
    <property type="project" value="UniProtKB-UniRule"/>
</dbReference>
<dbReference type="GO" id="GO:0009378">
    <property type="term" value="F:four-way junction helicase activity"/>
    <property type="evidence" value="ECO:0007669"/>
    <property type="project" value="InterPro"/>
</dbReference>
<dbReference type="GO" id="GO:0006310">
    <property type="term" value="P:DNA recombination"/>
    <property type="evidence" value="ECO:0007669"/>
    <property type="project" value="UniProtKB-UniRule"/>
</dbReference>
<dbReference type="GO" id="GO:0006281">
    <property type="term" value="P:DNA repair"/>
    <property type="evidence" value="ECO:0007669"/>
    <property type="project" value="UniProtKB-UniRule"/>
</dbReference>
<dbReference type="CDD" id="cd14332">
    <property type="entry name" value="UBA_RuvA_C"/>
    <property type="match status" value="1"/>
</dbReference>
<dbReference type="Gene3D" id="1.10.150.20">
    <property type="entry name" value="5' to 3' exonuclease, C-terminal subdomain"/>
    <property type="match status" value="1"/>
</dbReference>
<dbReference type="Gene3D" id="1.10.8.10">
    <property type="entry name" value="DNA helicase RuvA subunit, C-terminal domain"/>
    <property type="match status" value="1"/>
</dbReference>
<dbReference type="Gene3D" id="2.40.50.140">
    <property type="entry name" value="Nucleic acid-binding proteins"/>
    <property type="match status" value="1"/>
</dbReference>
<dbReference type="HAMAP" id="MF_00031">
    <property type="entry name" value="DNA_HJ_migration_RuvA"/>
    <property type="match status" value="1"/>
</dbReference>
<dbReference type="InterPro" id="IPR013849">
    <property type="entry name" value="DNA_helicase_Holl-junc_RuvA_I"/>
</dbReference>
<dbReference type="InterPro" id="IPR003583">
    <property type="entry name" value="Hlx-hairpin-Hlx_DNA-bd_motif"/>
</dbReference>
<dbReference type="InterPro" id="IPR012340">
    <property type="entry name" value="NA-bd_OB-fold"/>
</dbReference>
<dbReference type="InterPro" id="IPR000085">
    <property type="entry name" value="RuvA"/>
</dbReference>
<dbReference type="InterPro" id="IPR010994">
    <property type="entry name" value="RuvA_2-like"/>
</dbReference>
<dbReference type="InterPro" id="IPR011114">
    <property type="entry name" value="RuvA_C"/>
</dbReference>
<dbReference type="InterPro" id="IPR036267">
    <property type="entry name" value="RuvA_C_sf"/>
</dbReference>
<dbReference type="NCBIfam" id="TIGR00084">
    <property type="entry name" value="ruvA"/>
    <property type="match status" value="1"/>
</dbReference>
<dbReference type="Pfam" id="PF14520">
    <property type="entry name" value="HHH_5"/>
    <property type="match status" value="1"/>
</dbReference>
<dbReference type="Pfam" id="PF07499">
    <property type="entry name" value="RuvA_C"/>
    <property type="match status" value="1"/>
</dbReference>
<dbReference type="Pfam" id="PF01330">
    <property type="entry name" value="RuvA_N"/>
    <property type="match status" value="1"/>
</dbReference>
<dbReference type="SMART" id="SM00278">
    <property type="entry name" value="HhH1"/>
    <property type="match status" value="2"/>
</dbReference>
<dbReference type="SUPFAM" id="SSF46929">
    <property type="entry name" value="DNA helicase RuvA subunit, C-terminal domain"/>
    <property type="match status" value="1"/>
</dbReference>
<dbReference type="SUPFAM" id="SSF50249">
    <property type="entry name" value="Nucleic acid-binding proteins"/>
    <property type="match status" value="1"/>
</dbReference>
<dbReference type="SUPFAM" id="SSF47781">
    <property type="entry name" value="RuvA domain 2-like"/>
    <property type="match status" value="1"/>
</dbReference>
<sequence>MIGRLRGVLVEKQAPEILIDVNGVGYELQMPLTSFYELPEVNHETMVYTHFVVREDAQLLYGFITKQERALFRLLIKTNGVGPKLALTILSGMTAGEFVGCVERDDIVTLVKLPGVGKKTAERLLVEMRDKLKSLMEASAGSEREFVLQSNYSPAPTVNSAEEDAISALISLGYKPPQASKSVSAAYKEGMDSETLIKAALKSML</sequence>
<comment type="function">
    <text evidence="1">The RuvA-RuvB-RuvC complex processes Holliday junction (HJ) DNA during genetic recombination and DNA repair, while the RuvA-RuvB complex plays an important role in the rescue of blocked DNA replication forks via replication fork reversal (RFR). RuvA specifically binds to HJ cruciform DNA, conferring on it an open structure. The RuvB hexamer acts as an ATP-dependent pump, pulling dsDNA into and through the RuvAB complex. HJ branch migration allows RuvC to scan DNA until it finds its consensus sequence, where it cleaves and resolves the cruciform DNA.</text>
</comment>
<comment type="subunit">
    <text evidence="1">Homotetramer. Forms an RuvA(8)-RuvB(12)-Holliday junction (HJ) complex. HJ DNA is sandwiched between 2 RuvA tetramers; dsDNA enters through RuvA and exits via RuvB. An RuvB hexamer assembles on each DNA strand where it exits the tetramer. Each RuvB hexamer is contacted by two RuvA subunits (via domain III) on 2 adjacent RuvB subunits; this complex drives branch migration. In the full resolvosome a probable DNA-RuvA(4)-RuvB(12)-RuvC(2) complex forms which resolves the HJ.</text>
</comment>
<comment type="subcellular location">
    <subcellularLocation>
        <location evidence="1">Cytoplasm</location>
    </subcellularLocation>
</comment>
<comment type="domain">
    <text evidence="1">Has three domains with a flexible linker between the domains II and III and assumes an 'L' shape. Domain III is highly mobile and contacts RuvB.</text>
</comment>
<comment type="similarity">
    <text evidence="1">Belongs to the RuvA family.</text>
</comment>
<keyword id="KW-0963">Cytoplasm</keyword>
<keyword id="KW-0227">DNA damage</keyword>
<keyword id="KW-0233">DNA recombination</keyword>
<keyword id="KW-0234">DNA repair</keyword>
<keyword id="KW-0238">DNA-binding</keyword>
<proteinExistence type="inferred from homology"/>
<organism>
    <name type="scientific">Shewanella baltica (strain OS185)</name>
    <dbReference type="NCBI Taxonomy" id="402882"/>
    <lineage>
        <taxon>Bacteria</taxon>
        <taxon>Pseudomonadati</taxon>
        <taxon>Pseudomonadota</taxon>
        <taxon>Gammaproteobacteria</taxon>
        <taxon>Alteromonadales</taxon>
        <taxon>Shewanellaceae</taxon>
        <taxon>Shewanella</taxon>
    </lineage>
</organism>
<name>RUVA_SHEB8</name>